<name>COBQ_SYNY3</name>
<gene>
    <name type="primary">cobQ</name>
    <name type="synonym">cbiP</name>
    <name type="ordered locus">slr0618</name>
</gene>
<accession>Q55860</accession>
<organism>
    <name type="scientific">Synechocystis sp. (strain ATCC 27184 / PCC 6803 / Kazusa)</name>
    <dbReference type="NCBI Taxonomy" id="1111708"/>
    <lineage>
        <taxon>Bacteria</taxon>
        <taxon>Bacillati</taxon>
        <taxon>Cyanobacteriota</taxon>
        <taxon>Cyanophyceae</taxon>
        <taxon>Synechococcales</taxon>
        <taxon>Merismopediaceae</taxon>
        <taxon>Synechocystis</taxon>
    </lineage>
</organism>
<keyword id="KW-0169">Cobalamin biosynthesis</keyword>
<keyword id="KW-0315">Glutamine amidotransferase</keyword>
<keyword id="KW-1185">Reference proteome</keyword>
<comment type="function">
    <text evidence="1">Catalyzes amidations at positions B, D, E, and G on adenosylcobyrinic A,C-diamide. NH(2) groups are provided by glutamine, and one molecule of ATP is hydrogenolyzed for each amidation (By similarity).</text>
</comment>
<comment type="pathway">
    <text>Cofactor biosynthesis; adenosylcobalamin biosynthesis.</text>
</comment>
<comment type="similarity">
    <text evidence="2">Belongs to the CobB/CobQ family. CobQ subfamily.</text>
</comment>
<comment type="sequence caution" evidence="2">
    <conflict type="erroneous initiation">
        <sequence resource="EMBL-CDS" id="BAA10617"/>
    </conflict>
</comment>
<sequence>MKAIMVVGTTSHAGKSFLTTGLCRLLRRRGDRVTPFKGQNMALNAFVTIDGGEMGHAQAVQAWAAGTVPRVAMNPILLKPQGDMTSQVIMLGQAVGTTRAQEYYQNYFDRGWQAIANSLETLAQDFDVVVCEGAGSPAEINLKHRDLTNMRVATHLQAATILIADIDRGGVFAHVVGTLQLLEPEERKLIKGIVINKFRGQRSLLDSGITWLEEYTGIPVLGVIPYGQNLFSAEDSLDILERSGRPSKEDIRIVVLRLPRIANFTDFEPLEAESGVYVDYLPLEKQLGNPDAVIIPGSKTTIADLQALQNSGMAQQIMDYAQAGGTVMGICGGYQMLGQTIADPENIEGNVSNCQGLGLLPLTTVINQEKITRQCQTITHAPPSGLTVTGYEIHQGLSRRSEHSQDFLPMFDQEELGMVNAQQNLWGCYLHGLFDNGAWRRCWLNNLRQRRGLDPLPTSIGNYQEQREGMLDSLADFVETHVNLEPILQSLPEENETP</sequence>
<protein>
    <recommendedName>
        <fullName>Cobyric acid synthase</fullName>
    </recommendedName>
</protein>
<dbReference type="EMBL" id="BA000022">
    <property type="protein sequence ID" value="BAA10617.1"/>
    <property type="status" value="ALT_INIT"/>
    <property type="molecule type" value="Genomic_DNA"/>
</dbReference>
<dbReference type="PIR" id="S76673">
    <property type="entry name" value="S76673"/>
</dbReference>
<dbReference type="SMR" id="Q55860"/>
<dbReference type="IntAct" id="Q55860">
    <property type="interactions" value="1"/>
</dbReference>
<dbReference type="STRING" id="1148.gene:10500121"/>
<dbReference type="PaxDb" id="1148-1001778"/>
<dbReference type="EnsemblBacteria" id="BAA10617">
    <property type="protein sequence ID" value="BAA10617"/>
    <property type="gene ID" value="BAA10617"/>
</dbReference>
<dbReference type="KEGG" id="syn:slr0618"/>
<dbReference type="eggNOG" id="COG1492">
    <property type="taxonomic scope" value="Bacteria"/>
</dbReference>
<dbReference type="InParanoid" id="Q55860"/>
<dbReference type="PhylomeDB" id="Q55860"/>
<dbReference type="UniPathway" id="UPA00148"/>
<dbReference type="Proteomes" id="UP000001425">
    <property type="component" value="Chromosome"/>
</dbReference>
<dbReference type="GO" id="GO:0015420">
    <property type="term" value="F:ABC-type vitamin B12 transporter activity"/>
    <property type="evidence" value="ECO:0007669"/>
    <property type="project" value="UniProtKB-UniRule"/>
</dbReference>
<dbReference type="GO" id="GO:0003824">
    <property type="term" value="F:catalytic activity"/>
    <property type="evidence" value="ECO:0007669"/>
    <property type="project" value="InterPro"/>
</dbReference>
<dbReference type="GO" id="GO:0009236">
    <property type="term" value="P:cobalamin biosynthetic process"/>
    <property type="evidence" value="ECO:0007669"/>
    <property type="project" value="UniProtKB-UniRule"/>
</dbReference>
<dbReference type="CDD" id="cd05389">
    <property type="entry name" value="CobQ_N"/>
    <property type="match status" value="1"/>
</dbReference>
<dbReference type="CDD" id="cd01750">
    <property type="entry name" value="GATase1_CobQ"/>
    <property type="match status" value="1"/>
</dbReference>
<dbReference type="Gene3D" id="3.40.50.880">
    <property type="match status" value="1"/>
</dbReference>
<dbReference type="Gene3D" id="3.40.50.300">
    <property type="entry name" value="P-loop containing nucleotide triphosphate hydrolases"/>
    <property type="match status" value="1"/>
</dbReference>
<dbReference type="HAMAP" id="MF_00028">
    <property type="entry name" value="CobQ"/>
    <property type="match status" value="1"/>
</dbReference>
<dbReference type="InterPro" id="IPR029062">
    <property type="entry name" value="Class_I_gatase-like"/>
</dbReference>
<dbReference type="InterPro" id="IPR002586">
    <property type="entry name" value="CobQ/CobB/MinD/ParA_Nub-bd_dom"/>
</dbReference>
<dbReference type="InterPro" id="IPR033949">
    <property type="entry name" value="CobQ_GATase1"/>
</dbReference>
<dbReference type="InterPro" id="IPR047045">
    <property type="entry name" value="CobQ_N"/>
</dbReference>
<dbReference type="InterPro" id="IPR004459">
    <property type="entry name" value="CobQ_synth"/>
</dbReference>
<dbReference type="InterPro" id="IPR011698">
    <property type="entry name" value="GATase_3"/>
</dbReference>
<dbReference type="InterPro" id="IPR027417">
    <property type="entry name" value="P-loop_NTPase"/>
</dbReference>
<dbReference type="NCBIfam" id="TIGR00313">
    <property type="entry name" value="cobQ"/>
    <property type="match status" value="1"/>
</dbReference>
<dbReference type="NCBIfam" id="NF001989">
    <property type="entry name" value="PRK00784.1"/>
    <property type="match status" value="1"/>
</dbReference>
<dbReference type="PANTHER" id="PTHR21343:SF1">
    <property type="entry name" value="COBYRIC ACID SYNTHASE"/>
    <property type="match status" value="1"/>
</dbReference>
<dbReference type="PANTHER" id="PTHR21343">
    <property type="entry name" value="DETHIOBIOTIN SYNTHETASE"/>
    <property type="match status" value="1"/>
</dbReference>
<dbReference type="Pfam" id="PF01656">
    <property type="entry name" value="CbiA"/>
    <property type="match status" value="1"/>
</dbReference>
<dbReference type="Pfam" id="PF07685">
    <property type="entry name" value="GATase_3"/>
    <property type="match status" value="1"/>
</dbReference>
<dbReference type="SUPFAM" id="SSF52317">
    <property type="entry name" value="Class I glutamine amidotransferase-like"/>
    <property type="match status" value="1"/>
</dbReference>
<dbReference type="SUPFAM" id="SSF52540">
    <property type="entry name" value="P-loop containing nucleoside triphosphate hydrolases"/>
    <property type="match status" value="1"/>
</dbReference>
<dbReference type="PROSITE" id="PS51274">
    <property type="entry name" value="GATASE_COBBQ"/>
    <property type="match status" value="1"/>
</dbReference>
<proteinExistence type="inferred from homology"/>
<evidence type="ECO:0000250" key="1"/>
<evidence type="ECO:0000305" key="2"/>
<reference key="1">
    <citation type="journal article" date="1995" name="DNA Res.">
        <title>Sequence analysis of the genome of the unicellular cyanobacterium Synechocystis sp. strain PCC6803. I. Sequence features in the 1 Mb region from map positions 64% to 92% of the genome.</title>
        <authorList>
            <person name="Kaneko T."/>
            <person name="Tanaka A."/>
            <person name="Sato S."/>
            <person name="Kotani H."/>
            <person name="Sazuka T."/>
            <person name="Miyajima N."/>
            <person name="Sugiura M."/>
            <person name="Tabata S."/>
        </authorList>
    </citation>
    <scope>NUCLEOTIDE SEQUENCE [LARGE SCALE GENOMIC DNA]</scope>
    <source>
        <strain>ATCC 27184 / PCC 6803 / N-1</strain>
    </source>
</reference>
<reference key="2">
    <citation type="journal article" date="1996" name="DNA Res.">
        <title>Sequence analysis of the genome of the unicellular cyanobacterium Synechocystis sp. strain PCC6803. II. Sequence determination of the entire genome and assignment of potential protein-coding regions.</title>
        <authorList>
            <person name="Kaneko T."/>
            <person name="Sato S."/>
            <person name="Kotani H."/>
            <person name="Tanaka A."/>
            <person name="Asamizu E."/>
            <person name="Nakamura Y."/>
            <person name="Miyajima N."/>
            <person name="Hirosawa M."/>
            <person name="Sugiura M."/>
            <person name="Sasamoto S."/>
            <person name="Kimura T."/>
            <person name="Hosouchi T."/>
            <person name="Matsuno A."/>
            <person name="Muraki A."/>
            <person name="Nakazaki N."/>
            <person name="Naruo K."/>
            <person name="Okumura S."/>
            <person name="Shimpo S."/>
            <person name="Takeuchi C."/>
            <person name="Wada T."/>
            <person name="Watanabe A."/>
            <person name="Yamada M."/>
            <person name="Yasuda M."/>
            <person name="Tabata S."/>
        </authorList>
    </citation>
    <scope>NUCLEOTIDE SEQUENCE [LARGE SCALE GENOMIC DNA]</scope>
    <source>
        <strain>ATCC 27184 / PCC 6803 / Kazusa</strain>
    </source>
</reference>
<feature type="chain" id="PRO_0000141336" description="Cobyric acid synthase">
    <location>
        <begin position="1"/>
        <end position="498"/>
    </location>
</feature>
<feature type="domain" description="GATase cobBQ-type">
    <location>
        <begin position="250"/>
        <end position="439"/>
    </location>
</feature>
<feature type="active site" description="Nucleophile" evidence="1">
    <location>
        <position position="331"/>
    </location>
</feature>
<feature type="active site" evidence="1">
    <location>
        <position position="431"/>
    </location>
</feature>